<dbReference type="EC" id="3.1.1.29" evidence="1"/>
<dbReference type="EMBL" id="CP000095">
    <property type="protein sequence ID" value="AAZ59104.1"/>
    <property type="molecule type" value="Genomic_DNA"/>
</dbReference>
<dbReference type="RefSeq" id="WP_011294249.1">
    <property type="nucleotide sequence ID" value="NC_007335.2"/>
</dbReference>
<dbReference type="SMR" id="Q46HC4"/>
<dbReference type="STRING" id="59920.PMN2A_1616"/>
<dbReference type="KEGG" id="pmn:PMN2A_1616"/>
<dbReference type="HOGENOM" id="CLU_062456_4_1_3"/>
<dbReference type="OrthoDB" id="9800507at2"/>
<dbReference type="PhylomeDB" id="Q46HC4"/>
<dbReference type="Proteomes" id="UP000002535">
    <property type="component" value="Chromosome"/>
</dbReference>
<dbReference type="GO" id="GO:0005737">
    <property type="term" value="C:cytoplasm"/>
    <property type="evidence" value="ECO:0007669"/>
    <property type="project" value="UniProtKB-SubCell"/>
</dbReference>
<dbReference type="GO" id="GO:0004045">
    <property type="term" value="F:peptidyl-tRNA hydrolase activity"/>
    <property type="evidence" value="ECO:0007669"/>
    <property type="project" value="UniProtKB-UniRule"/>
</dbReference>
<dbReference type="GO" id="GO:0000049">
    <property type="term" value="F:tRNA binding"/>
    <property type="evidence" value="ECO:0007669"/>
    <property type="project" value="UniProtKB-UniRule"/>
</dbReference>
<dbReference type="GO" id="GO:0006515">
    <property type="term" value="P:protein quality control for misfolded or incompletely synthesized proteins"/>
    <property type="evidence" value="ECO:0007669"/>
    <property type="project" value="UniProtKB-UniRule"/>
</dbReference>
<dbReference type="GO" id="GO:0072344">
    <property type="term" value="P:rescue of stalled ribosome"/>
    <property type="evidence" value="ECO:0007669"/>
    <property type="project" value="UniProtKB-UniRule"/>
</dbReference>
<dbReference type="CDD" id="cd00462">
    <property type="entry name" value="PTH"/>
    <property type="match status" value="1"/>
</dbReference>
<dbReference type="FunFam" id="3.40.50.1470:FF:000001">
    <property type="entry name" value="Peptidyl-tRNA hydrolase"/>
    <property type="match status" value="1"/>
</dbReference>
<dbReference type="Gene3D" id="3.40.50.1470">
    <property type="entry name" value="Peptidyl-tRNA hydrolase"/>
    <property type="match status" value="1"/>
</dbReference>
<dbReference type="HAMAP" id="MF_00083">
    <property type="entry name" value="Pept_tRNA_hydro_bact"/>
    <property type="match status" value="1"/>
</dbReference>
<dbReference type="InterPro" id="IPR001328">
    <property type="entry name" value="Pept_tRNA_hydro"/>
</dbReference>
<dbReference type="InterPro" id="IPR018171">
    <property type="entry name" value="Pept_tRNA_hydro_CS"/>
</dbReference>
<dbReference type="InterPro" id="IPR036416">
    <property type="entry name" value="Pept_tRNA_hydro_sf"/>
</dbReference>
<dbReference type="NCBIfam" id="TIGR00447">
    <property type="entry name" value="pth"/>
    <property type="match status" value="1"/>
</dbReference>
<dbReference type="PANTHER" id="PTHR17224">
    <property type="entry name" value="PEPTIDYL-TRNA HYDROLASE"/>
    <property type="match status" value="1"/>
</dbReference>
<dbReference type="PANTHER" id="PTHR17224:SF1">
    <property type="entry name" value="PEPTIDYL-TRNA HYDROLASE"/>
    <property type="match status" value="1"/>
</dbReference>
<dbReference type="Pfam" id="PF01195">
    <property type="entry name" value="Pept_tRNA_hydro"/>
    <property type="match status" value="1"/>
</dbReference>
<dbReference type="SUPFAM" id="SSF53178">
    <property type="entry name" value="Peptidyl-tRNA hydrolase-like"/>
    <property type="match status" value="1"/>
</dbReference>
<dbReference type="PROSITE" id="PS01195">
    <property type="entry name" value="PEPT_TRNA_HYDROL_1"/>
    <property type="match status" value="1"/>
</dbReference>
<dbReference type="PROSITE" id="PS01196">
    <property type="entry name" value="PEPT_TRNA_HYDROL_2"/>
    <property type="match status" value="1"/>
</dbReference>
<keyword id="KW-0963">Cytoplasm</keyword>
<keyword id="KW-0378">Hydrolase</keyword>
<keyword id="KW-1185">Reference proteome</keyword>
<keyword id="KW-0694">RNA-binding</keyword>
<keyword id="KW-0820">tRNA-binding</keyword>
<organism>
    <name type="scientific">Prochlorococcus marinus (strain NATL2A)</name>
    <dbReference type="NCBI Taxonomy" id="59920"/>
    <lineage>
        <taxon>Bacteria</taxon>
        <taxon>Bacillati</taxon>
        <taxon>Cyanobacteriota</taxon>
        <taxon>Cyanophyceae</taxon>
        <taxon>Synechococcales</taxon>
        <taxon>Prochlorococcaceae</taxon>
        <taxon>Prochlorococcus</taxon>
    </lineage>
</organism>
<evidence type="ECO:0000255" key="1">
    <source>
        <dbReference type="HAMAP-Rule" id="MF_00083"/>
    </source>
</evidence>
<proteinExistence type="inferred from homology"/>
<sequence>MLSDELKLLVGLGNPGTEYEKTRHNVGFMVLEEIARKNNCSFRESKKLFGRTCEYGSGIEKTRLLMPNTYMNESGKSVRSAKDWFDFQNNQLIVLVDDMDLPLGKIRVRSKGSSGGHNGLKSIINHLGTAEFKRLKIGIGAPSNDQQERKSKTVSHVLGRFSKEEFIILNFIIQEIISCIESITSNNWEKISTRLNSYKPDN</sequence>
<protein>
    <recommendedName>
        <fullName evidence="1">Peptidyl-tRNA hydrolase</fullName>
        <shortName evidence="1">Pth</shortName>
        <ecNumber evidence="1">3.1.1.29</ecNumber>
    </recommendedName>
</protein>
<feature type="chain" id="PRO_0000264076" description="Peptidyl-tRNA hydrolase">
    <location>
        <begin position="1"/>
        <end position="202"/>
    </location>
</feature>
<feature type="active site" description="Proton acceptor" evidence="1">
    <location>
        <position position="24"/>
    </location>
</feature>
<feature type="binding site" evidence="1">
    <location>
        <position position="19"/>
    </location>
    <ligand>
        <name>tRNA</name>
        <dbReference type="ChEBI" id="CHEBI:17843"/>
    </ligand>
</feature>
<feature type="binding site" evidence="1">
    <location>
        <position position="70"/>
    </location>
    <ligand>
        <name>tRNA</name>
        <dbReference type="ChEBI" id="CHEBI:17843"/>
    </ligand>
</feature>
<feature type="binding site" evidence="1">
    <location>
        <position position="72"/>
    </location>
    <ligand>
        <name>tRNA</name>
        <dbReference type="ChEBI" id="CHEBI:17843"/>
    </ligand>
</feature>
<feature type="binding site" evidence="1">
    <location>
        <position position="118"/>
    </location>
    <ligand>
        <name>tRNA</name>
        <dbReference type="ChEBI" id="CHEBI:17843"/>
    </ligand>
</feature>
<feature type="site" description="Discriminates between blocked and unblocked aminoacyl-tRNA" evidence="1">
    <location>
        <position position="14"/>
    </location>
</feature>
<feature type="site" description="Stabilizes the basic form of H active site to accept a proton" evidence="1">
    <location>
        <position position="97"/>
    </location>
</feature>
<accession>Q46HC4</accession>
<comment type="function">
    <text evidence="1">Hydrolyzes ribosome-free peptidyl-tRNAs (with 1 or more amino acids incorporated), which drop off the ribosome during protein synthesis, or as a result of ribosome stalling.</text>
</comment>
<comment type="function">
    <text evidence="1">Catalyzes the release of premature peptidyl moieties from peptidyl-tRNA molecules trapped in stalled 50S ribosomal subunits, and thus maintains levels of free tRNAs and 50S ribosomes.</text>
</comment>
<comment type="catalytic activity">
    <reaction evidence="1">
        <text>an N-acyl-L-alpha-aminoacyl-tRNA + H2O = an N-acyl-L-amino acid + a tRNA + H(+)</text>
        <dbReference type="Rhea" id="RHEA:54448"/>
        <dbReference type="Rhea" id="RHEA-COMP:10123"/>
        <dbReference type="Rhea" id="RHEA-COMP:13883"/>
        <dbReference type="ChEBI" id="CHEBI:15377"/>
        <dbReference type="ChEBI" id="CHEBI:15378"/>
        <dbReference type="ChEBI" id="CHEBI:59874"/>
        <dbReference type="ChEBI" id="CHEBI:78442"/>
        <dbReference type="ChEBI" id="CHEBI:138191"/>
        <dbReference type="EC" id="3.1.1.29"/>
    </reaction>
</comment>
<comment type="subunit">
    <text evidence="1">Monomer.</text>
</comment>
<comment type="subcellular location">
    <subcellularLocation>
        <location evidence="1">Cytoplasm</location>
    </subcellularLocation>
</comment>
<comment type="similarity">
    <text evidence="1">Belongs to the PTH family.</text>
</comment>
<name>PTH_PROMT</name>
<gene>
    <name evidence="1" type="primary">pth</name>
    <name type="ordered locus">PMN2A_1616</name>
</gene>
<reference key="1">
    <citation type="journal article" date="2007" name="PLoS Genet.">
        <title>Patterns and implications of gene gain and loss in the evolution of Prochlorococcus.</title>
        <authorList>
            <person name="Kettler G.C."/>
            <person name="Martiny A.C."/>
            <person name="Huang K."/>
            <person name="Zucker J."/>
            <person name="Coleman M.L."/>
            <person name="Rodrigue S."/>
            <person name="Chen F."/>
            <person name="Lapidus A."/>
            <person name="Ferriera S."/>
            <person name="Johnson J."/>
            <person name="Steglich C."/>
            <person name="Church G.M."/>
            <person name="Richardson P."/>
            <person name="Chisholm S.W."/>
        </authorList>
    </citation>
    <scope>NUCLEOTIDE SEQUENCE [LARGE SCALE GENOMIC DNA]</scope>
    <source>
        <strain>NATL2A</strain>
    </source>
</reference>